<protein>
    <recommendedName>
        <fullName evidence="1">Putative pterin-4-alpha-carbinolamine dehydratase</fullName>
        <shortName evidence="1">PHS</shortName>
        <ecNumber evidence="1">4.2.1.96</ecNumber>
    </recommendedName>
    <alternativeName>
        <fullName evidence="1">4-alpha-hydroxy-tetrahydropterin dehydratase</fullName>
    </alternativeName>
    <alternativeName>
        <fullName evidence="1">Pterin carbinolamine dehydratase</fullName>
        <shortName evidence="1">PCD</shortName>
    </alternativeName>
</protein>
<gene>
    <name type="ordered locus">Xfasm12_2173</name>
</gene>
<feature type="chain" id="PRO_1000192945" description="Putative pterin-4-alpha-carbinolamine dehydratase">
    <location>
        <begin position="1"/>
        <end position="116"/>
    </location>
</feature>
<accession>B0U5V4</accession>
<proteinExistence type="inferred from homology"/>
<sequence length="116" mass="13109">MNDRITLAQAHCQPREKKEHKLGQARLAELLPQVPGWELSNNGHALTRTFQFDNYYRTLAFVNALAFIAHCEDHHPDMNVHYGRAVVCFSTHKIGGISEIDFICAAKTSALYEQGI</sequence>
<comment type="catalytic activity">
    <reaction evidence="1">
        <text>(4aS,6R)-4a-hydroxy-L-erythro-5,6,7,8-tetrahydrobiopterin = (6R)-L-erythro-6,7-dihydrobiopterin + H2O</text>
        <dbReference type="Rhea" id="RHEA:11920"/>
        <dbReference type="ChEBI" id="CHEBI:15377"/>
        <dbReference type="ChEBI" id="CHEBI:15642"/>
        <dbReference type="ChEBI" id="CHEBI:43120"/>
        <dbReference type="EC" id="4.2.1.96"/>
    </reaction>
</comment>
<comment type="similarity">
    <text evidence="1">Belongs to the pterin-4-alpha-carbinolamine dehydratase family.</text>
</comment>
<dbReference type="EC" id="4.2.1.96" evidence="1"/>
<dbReference type="EMBL" id="CP000941">
    <property type="protein sequence ID" value="ACA13026.1"/>
    <property type="molecule type" value="Genomic_DNA"/>
</dbReference>
<dbReference type="RefSeq" id="WP_004084670.1">
    <property type="nucleotide sequence ID" value="NC_010513.1"/>
</dbReference>
<dbReference type="SMR" id="B0U5V4"/>
<dbReference type="KEGG" id="xfm:Xfasm12_2173"/>
<dbReference type="HOGENOM" id="CLU_081974_2_1_6"/>
<dbReference type="GO" id="GO:0008124">
    <property type="term" value="F:4-alpha-hydroxytetrahydrobiopterin dehydratase activity"/>
    <property type="evidence" value="ECO:0007669"/>
    <property type="project" value="UniProtKB-UniRule"/>
</dbReference>
<dbReference type="GO" id="GO:0006729">
    <property type="term" value="P:tetrahydrobiopterin biosynthetic process"/>
    <property type="evidence" value="ECO:0007669"/>
    <property type="project" value="InterPro"/>
</dbReference>
<dbReference type="CDD" id="cd00913">
    <property type="entry name" value="PCD_DCoH_subfamily_a"/>
    <property type="match status" value="1"/>
</dbReference>
<dbReference type="Gene3D" id="3.30.1360.20">
    <property type="entry name" value="Transcriptional coactivator/pterin dehydratase"/>
    <property type="match status" value="1"/>
</dbReference>
<dbReference type="HAMAP" id="MF_00434">
    <property type="entry name" value="Pterin_4_alpha"/>
    <property type="match status" value="1"/>
</dbReference>
<dbReference type="InterPro" id="IPR036428">
    <property type="entry name" value="PCD_sf"/>
</dbReference>
<dbReference type="InterPro" id="IPR001533">
    <property type="entry name" value="Pterin_deHydtase"/>
</dbReference>
<dbReference type="NCBIfam" id="NF002019">
    <property type="entry name" value="PRK00823.1-4"/>
    <property type="match status" value="1"/>
</dbReference>
<dbReference type="PANTHER" id="PTHR12599">
    <property type="entry name" value="PTERIN-4-ALPHA-CARBINOLAMINE DEHYDRATASE"/>
    <property type="match status" value="1"/>
</dbReference>
<dbReference type="PANTHER" id="PTHR12599:SF0">
    <property type="entry name" value="PTERIN-4-ALPHA-CARBINOLAMINE DEHYDRATASE"/>
    <property type="match status" value="1"/>
</dbReference>
<dbReference type="Pfam" id="PF01329">
    <property type="entry name" value="Pterin_4a"/>
    <property type="match status" value="1"/>
</dbReference>
<dbReference type="SUPFAM" id="SSF55248">
    <property type="entry name" value="PCD-like"/>
    <property type="match status" value="1"/>
</dbReference>
<name>PHS_XYLFM</name>
<reference key="1">
    <citation type="journal article" date="2010" name="J. Bacteriol.">
        <title>Whole genome sequences of two Xylella fastidiosa strains (M12 and M23) causing almond leaf scorch disease in California.</title>
        <authorList>
            <person name="Chen J."/>
            <person name="Xie G."/>
            <person name="Han S."/>
            <person name="Chertkov O."/>
            <person name="Sims D."/>
            <person name="Civerolo E.L."/>
        </authorList>
    </citation>
    <scope>NUCLEOTIDE SEQUENCE [LARGE SCALE GENOMIC DNA]</scope>
    <source>
        <strain>M12</strain>
    </source>
</reference>
<organism>
    <name type="scientific">Xylella fastidiosa (strain M12)</name>
    <dbReference type="NCBI Taxonomy" id="405440"/>
    <lineage>
        <taxon>Bacteria</taxon>
        <taxon>Pseudomonadati</taxon>
        <taxon>Pseudomonadota</taxon>
        <taxon>Gammaproteobacteria</taxon>
        <taxon>Lysobacterales</taxon>
        <taxon>Lysobacteraceae</taxon>
        <taxon>Xylella</taxon>
    </lineage>
</organism>
<keyword id="KW-0456">Lyase</keyword>
<evidence type="ECO:0000255" key="1">
    <source>
        <dbReference type="HAMAP-Rule" id="MF_00434"/>
    </source>
</evidence>